<comment type="function">
    <text evidence="1">Core subunit of the mitochondrial membrane respiratory chain NADH dehydrogenase (Complex I) which catalyzes electron transfer from NADH through the respiratory chain, using ubiquinone as an electron acceptor. Part of the enzyme membrane arm which is embedded in the lipid bilayer and involved in proton translocation.</text>
</comment>
<comment type="catalytic activity">
    <reaction evidence="1">
        <text>a ubiquinone + NADH + 5 H(+)(in) = a ubiquinol + NAD(+) + 4 H(+)(out)</text>
        <dbReference type="Rhea" id="RHEA:29091"/>
        <dbReference type="Rhea" id="RHEA-COMP:9565"/>
        <dbReference type="Rhea" id="RHEA-COMP:9566"/>
        <dbReference type="ChEBI" id="CHEBI:15378"/>
        <dbReference type="ChEBI" id="CHEBI:16389"/>
        <dbReference type="ChEBI" id="CHEBI:17976"/>
        <dbReference type="ChEBI" id="CHEBI:57540"/>
        <dbReference type="ChEBI" id="CHEBI:57945"/>
        <dbReference type="EC" id="7.1.1.2"/>
    </reaction>
    <physiologicalReaction direction="left-to-right" evidence="1">
        <dbReference type="Rhea" id="RHEA:29092"/>
    </physiologicalReaction>
</comment>
<comment type="subunit">
    <text evidence="2">Core subunit of respiratory chain NADH dehydrogenase (Complex I) which is composed of 45 different subunits.</text>
</comment>
<comment type="subcellular location">
    <subcellularLocation>
        <location evidence="2">Mitochondrion inner membrane</location>
        <topology evidence="3">Multi-pass membrane protein</topology>
    </subcellularLocation>
</comment>
<comment type="similarity">
    <text evidence="4">Belongs to the complex I subunit 4L family.</text>
</comment>
<reference key="1">
    <citation type="journal article" date="2004" name="Gene">
        <title>Mitogenomic analyses provide new insights into cetacean origin and evolution.</title>
        <authorList>
            <person name="Arnason U."/>
            <person name="Gullberg A."/>
            <person name="Janke A."/>
        </authorList>
    </citation>
    <scope>NUCLEOTIDE SEQUENCE [GENOMIC DNA]</scope>
</reference>
<reference key="2">
    <citation type="journal article" date="2004" name="Mol. Phylogenet. Evol.">
        <title>Phylogeny of mysticete whales based on mitochondrial and nuclear data.</title>
        <authorList>
            <person name="Rychel A.L."/>
            <person name="Reeder T.W."/>
            <person name="Berta A."/>
        </authorList>
    </citation>
    <scope>NUCLEOTIDE SEQUENCE [GENOMIC DNA]</scope>
</reference>
<reference key="3">
    <citation type="journal article" date="2005" name="Syst. Biol.">
        <title>Mitochondrial phylogenetics and evolution of mysticete whales.</title>
        <authorList>
            <person name="Sasaki T."/>
            <person name="Nikaido M."/>
            <person name="Hamilton H."/>
            <person name="Goto M."/>
            <person name="Kato H."/>
            <person name="Kanda N."/>
            <person name="Pastene L.A."/>
            <person name="Cao Y."/>
            <person name="Fordyce R.E."/>
            <person name="Hasegawa M."/>
            <person name="Okada N."/>
        </authorList>
    </citation>
    <scope>NUCLEOTIDE SEQUENCE [GENOMIC DNA]</scope>
</reference>
<protein>
    <recommendedName>
        <fullName>NADH-ubiquinone oxidoreductase chain 4L</fullName>
        <ecNumber>7.1.1.2</ecNumber>
    </recommendedName>
    <alternativeName>
        <fullName>NADH dehydrogenase subunit 4L</fullName>
    </alternativeName>
</protein>
<feature type="chain" id="PRO_0000275013" description="NADH-ubiquinone oxidoreductase chain 4L">
    <location>
        <begin position="1"/>
        <end position="98"/>
    </location>
</feature>
<feature type="transmembrane region" description="Helical" evidence="3">
    <location>
        <begin position="1"/>
        <end position="21"/>
    </location>
</feature>
<feature type="transmembrane region" description="Helical" evidence="3">
    <location>
        <begin position="29"/>
        <end position="49"/>
    </location>
</feature>
<feature type="transmembrane region" description="Helical" evidence="3">
    <location>
        <begin position="61"/>
        <end position="81"/>
    </location>
</feature>
<keyword id="KW-0249">Electron transport</keyword>
<keyword id="KW-0472">Membrane</keyword>
<keyword id="KW-0496">Mitochondrion</keyword>
<keyword id="KW-0999">Mitochondrion inner membrane</keyword>
<keyword id="KW-0520">NAD</keyword>
<keyword id="KW-0679">Respiratory chain</keyword>
<keyword id="KW-1278">Translocase</keyword>
<keyword id="KW-0812">Transmembrane</keyword>
<keyword id="KW-1133">Transmembrane helix</keyword>
<keyword id="KW-0813">Transport</keyword>
<keyword id="KW-0830">Ubiquinone</keyword>
<sequence>MTLIHMNILMAFSMSLVGLLMYRSHLMSALLCLEGMMLSLFVLAALTILNSHFTLANMMPIILLVFAACEAAIGLALLVMVSNTYGTDYVQNLNLLQC</sequence>
<accession>Q70S06</accession>
<gene>
    <name type="primary">MT-ND4L</name>
    <name type="synonym">MTND4L</name>
    <name type="synonym">NADH4L</name>
    <name type="synonym">ND4L</name>
</gene>
<name>NU4LM_ESCRO</name>
<proteinExistence type="inferred from homology"/>
<geneLocation type="mitochondrion"/>
<dbReference type="EC" id="7.1.1.2"/>
<dbReference type="EMBL" id="AJ554053">
    <property type="protein sequence ID" value="CAD87918.1"/>
    <property type="molecule type" value="Genomic_DNA"/>
</dbReference>
<dbReference type="EMBL" id="AY398625">
    <property type="protein sequence ID" value="AAR33057.1"/>
    <property type="molecule type" value="Genomic_DNA"/>
</dbReference>
<dbReference type="EMBL" id="AP006471">
    <property type="protein sequence ID" value="BAD91741.1"/>
    <property type="molecule type" value="Genomic_DNA"/>
</dbReference>
<dbReference type="RefSeq" id="NP_944641.1">
    <property type="nucleotide sequence ID" value="NC_005270.1"/>
</dbReference>
<dbReference type="SMR" id="Q70S06"/>
<dbReference type="GeneID" id="2658477"/>
<dbReference type="CTD" id="4539"/>
<dbReference type="GO" id="GO:0005743">
    <property type="term" value="C:mitochondrial inner membrane"/>
    <property type="evidence" value="ECO:0000250"/>
    <property type="project" value="UniProtKB"/>
</dbReference>
<dbReference type="GO" id="GO:0045271">
    <property type="term" value="C:respiratory chain complex I"/>
    <property type="evidence" value="ECO:0000250"/>
    <property type="project" value="UniProtKB"/>
</dbReference>
<dbReference type="GO" id="GO:0008137">
    <property type="term" value="F:NADH dehydrogenase (ubiquinone) activity"/>
    <property type="evidence" value="ECO:0000250"/>
    <property type="project" value="UniProtKB"/>
</dbReference>
<dbReference type="GO" id="GO:0042773">
    <property type="term" value="P:ATP synthesis coupled electron transport"/>
    <property type="evidence" value="ECO:0007669"/>
    <property type="project" value="InterPro"/>
</dbReference>
<dbReference type="FunFam" id="1.10.287.3510:FF:000002">
    <property type="entry name" value="NADH-ubiquinone oxidoreductase chain 4L"/>
    <property type="match status" value="1"/>
</dbReference>
<dbReference type="Gene3D" id="1.10.287.3510">
    <property type="match status" value="1"/>
</dbReference>
<dbReference type="InterPro" id="IPR001133">
    <property type="entry name" value="NADH_UbQ_OxRdtase_chain4L/K"/>
</dbReference>
<dbReference type="InterPro" id="IPR039428">
    <property type="entry name" value="NUOK/Mnh_C1-like"/>
</dbReference>
<dbReference type="PANTHER" id="PTHR11434:SF0">
    <property type="entry name" value="NADH-UBIQUINONE OXIDOREDUCTASE CHAIN 4L"/>
    <property type="match status" value="1"/>
</dbReference>
<dbReference type="PANTHER" id="PTHR11434">
    <property type="entry name" value="NADH-UBIQUINONE OXIDOREDUCTASE SUBUNIT ND4L"/>
    <property type="match status" value="1"/>
</dbReference>
<dbReference type="Pfam" id="PF00420">
    <property type="entry name" value="Oxidored_q2"/>
    <property type="match status" value="1"/>
</dbReference>
<organism>
    <name type="scientific">Eschrichtius robustus</name>
    <name type="common">California gray whale</name>
    <name type="synonym">Eschrichtius gibbosus</name>
    <dbReference type="NCBI Taxonomy" id="9764"/>
    <lineage>
        <taxon>Eukaryota</taxon>
        <taxon>Metazoa</taxon>
        <taxon>Chordata</taxon>
        <taxon>Craniata</taxon>
        <taxon>Vertebrata</taxon>
        <taxon>Euteleostomi</taxon>
        <taxon>Mammalia</taxon>
        <taxon>Eutheria</taxon>
        <taxon>Laurasiatheria</taxon>
        <taxon>Artiodactyla</taxon>
        <taxon>Whippomorpha</taxon>
        <taxon>Cetacea</taxon>
        <taxon>Mysticeti</taxon>
        <taxon>Eschrichtiidae</taxon>
        <taxon>Eschrichtius</taxon>
    </lineage>
</organism>
<evidence type="ECO:0000250" key="1">
    <source>
        <dbReference type="UniProtKB" id="P03901"/>
    </source>
</evidence>
<evidence type="ECO:0000250" key="2">
    <source>
        <dbReference type="UniProtKB" id="P03902"/>
    </source>
</evidence>
<evidence type="ECO:0000255" key="3"/>
<evidence type="ECO:0000305" key="4"/>